<proteinExistence type="evidence at protein level"/>
<protein>
    <recommendedName>
        <fullName evidence="2">Nicotinamide/nicotinic acid mononucleotide adenylyltransferase</fullName>
        <shortName evidence="2">NMN/NaMN adenylyltransferase</shortName>
        <ecNumber evidence="2">2.7.7.1</ecNumber>
        <ecNumber evidence="2">2.7.7.18</ecNumber>
    </recommendedName>
    <alternativeName>
        <fullName evidence="2">Nicotinamide-nucleotide adenylyltransferase</fullName>
        <shortName evidence="2">NMN adenylyltransferase</shortName>
        <shortName evidence="2">NMNAT</shortName>
    </alternativeName>
    <alternativeName>
        <fullName evidence="2">Nicotinate-nucleotide adenylyltransferase</fullName>
        <shortName evidence="2">NaMN adenylyltransferase</shortName>
        <shortName evidence="2">NaMNAT</shortName>
    </alternativeName>
</protein>
<keyword id="KW-0067">ATP-binding</keyword>
<keyword id="KW-0963">Cytoplasm</keyword>
<keyword id="KW-0520">NAD</keyword>
<keyword id="KW-0547">Nucleotide-binding</keyword>
<keyword id="KW-0548">Nucleotidyltransferase</keyword>
<keyword id="KW-0539">Nucleus</keyword>
<keyword id="KW-0597">Phosphoprotein</keyword>
<keyword id="KW-0662">Pyridine nucleotide biosynthesis</keyword>
<keyword id="KW-1185">Reference proteome</keyword>
<keyword id="KW-0808">Transferase</keyword>
<reference key="1">
    <citation type="journal article" date="2002" name="Nature">
        <title>The genome sequence of Schizosaccharomyces pombe.</title>
        <authorList>
            <person name="Wood V."/>
            <person name="Gwilliam R."/>
            <person name="Rajandream M.A."/>
            <person name="Lyne M.H."/>
            <person name="Lyne R."/>
            <person name="Stewart A."/>
            <person name="Sgouros J.G."/>
            <person name="Peat N."/>
            <person name="Hayles J."/>
            <person name="Baker S.G."/>
            <person name="Basham D."/>
            <person name="Bowman S."/>
            <person name="Brooks K."/>
            <person name="Brown D."/>
            <person name="Brown S."/>
            <person name="Chillingworth T."/>
            <person name="Churcher C.M."/>
            <person name="Collins M."/>
            <person name="Connor R."/>
            <person name="Cronin A."/>
            <person name="Davis P."/>
            <person name="Feltwell T."/>
            <person name="Fraser A."/>
            <person name="Gentles S."/>
            <person name="Goble A."/>
            <person name="Hamlin N."/>
            <person name="Harris D.E."/>
            <person name="Hidalgo J."/>
            <person name="Hodgson G."/>
            <person name="Holroyd S."/>
            <person name="Hornsby T."/>
            <person name="Howarth S."/>
            <person name="Huckle E.J."/>
            <person name="Hunt S."/>
            <person name="Jagels K."/>
            <person name="James K.D."/>
            <person name="Jones L."/>
            <person name="Jones M."/>
            <person name="Leather S."/>
            <person name="McDonald S."/>
            <person name="McLean J."/>
            <person name="Mooney P."/>
            <person name="Moule S."/>
            <person name="Mungall K.L."/>
            <person name="Murphy L.D."/>
            <person name="Niblett D."/>
            <person name="Odell C."/>
            <person name="Oliver K."/>
            <person name="O'Neil S."/>
            <person name="Pearson D."/>
            <person name="Quail M.A."/>
            <person name="Rabbinowitsch E."/>
            <person name="Rutherford K.M."/>
            <person name="Rutter S."/>
            <person name="Saunders D."/>
            <person name="Seeger K."/>
            <person name="Sharp S."/>
            <person name="Skelton J."/>
            <person name="Simmonds M.N."/>
            <person name="Squares R."/>
            <person name="Squares S."/>
            <person name="Stevens K."/>
            <person name="Taylor K."/>
            <person name="Taylor R.G."/>
            <person name="Tivey A."/>
            <person name="Walsh S.V."/>
            <person name="Warren T."/>
            <person name="Whitehead S."/>
            <person name="Woodward J.R."/>
            <person name="Volckaert G."/>
            <person name="Aert R."/>
            <person name="Robben J."/>
            <person name="Grymonprez B."/>
            <person name="Weltjens I."/>
            <person name="Vanstreels E."/>
            <person name="Rieger M."/>
            <person name="Schaefer M."/>
            <person name="Mueller-Auer S."/>
            <person name="Gabel C."/>
            <person name="Fuchs M."/>
            <person name="Duesterhoeft A."/>
            <person name="Fritzc C."/>
            <person name="Holzer E."/>
            <person name="Moestl D."/>
            <person name="Hilbert H."/>
            <person name="Borzym K."/>
            <person name="Langer I."/>
            <person name="Beck A."/>
            <person name="Lehrach H."/>
            <person name="Reinhardt R."/>
            <person name="Pohl T.M."/>
            <person name="Eger P."/>
            <person name="Zimmermann W."/>
            <person name="Wedler H."/>
            <person name="Wambutt R."/>
            <person name="Purnelle B."/>
            <person name="Goffeau A."/>
            <person name="Cadieu E."/>
            <person name="Dreano S."/>
            <person name="Gloux S."/>
            <person name="Lelaure V."/>
            <person name="Mottier S."/>
            <person name="Galibert F."/>
            <person name="Aves S.J."/>
            <person name="Xiang Z."/>
            <person name="Hunt C."/>
            <person name="Moore K."/>
            <person name="Hurst S.M."/>
            <person name="Lucas M."/>
            <person name="Rochet M."/>
            <person name="Gaillardin C."/>
            <person name="Tallada V.A."/>
            <person name="Garzon A."/>
            <person name="Thode G."/>
            <person name="Daga R.R."/>
            <person name="Cruzado L."/>
            <person name="Jimenez J."/>
            <person name="Sanchez M."/>
            <person name="del Rey F."/>
            <person name="Benito J."/>
            <person name="Dominguez A."/>
            <person name="Revuelta J.L."/>
            <person name="Moreno S."/>
            <person name="Armstrong J."/>
            <person name="Forsburg S.L."/>
            <person name="Cerutti L."/>
            <person name="Lowe T."/>
            <person name="McCombie W.R."/>
            <person name="Paulsen I."/>
            <person name="Potashkin J."/>
            <person name="Shpakovski G.V."/>
            <person name="Ussery D."/>
            <person name="Barrell B.G."/>
            <person name="Nurse P."/>
        </authorList>
    </citation>
    <scope>NUCLEOTIDE SEQUENCE [LARGE SCALE GENOMIC DNA]</scope>
    <source>
        <strain>972 / ATCC 24843</strain>
    </source>
</reference>
<reference key="2">
    <citation type="journal article" date="2011" name="Science">
        <title>Comparative functional genomics of the fission yeasts.</title>
        <authorList>
            <person name="Rhind N."/>
            <person name="Chen Z."/>
            <person name="Yassour M."/>
            <person name="Thompson D.A."/>
            <person name="Haas B.J."/>
            <person name="Habib N."/>
            <person name="Wapinski I."/>
            <person name="Roy S."/>
            <person name="Lin M.F."/>
            <person name="Heiman D.I."/>
            <person name="Young S.K."/>
            <person name="Furuya K."/>
            <person name="Guo Y."/>
            <person name="Pidoux A."/>
            <person name="Chen H.M."/>
            <person name="Robbertse B."/>
            <person name="Goldberg J.M."/>
            <person name="Aoki K."/>
            <person name="Bayne E.H."/>
            <person name="Berlin A.M."/>
            <person name="Desjardins C.A."/>
            <person name="Dobbs E."/>
            <person name="Dukaj L."/>
            <person name="Fan L."/>
            <person name="FitzGerald M.G."/>
            <person name="French C."/>
            <person name="Gujja S."/>
            <person name="Hansen K."/>
            <person name="Keifenheim D."/>
            <person name="Levin J.Z."/>
            <person name="Mosher R.A."/>
            <person name="Mueller C.A."/>
            <person name="Pfiffner J."/>
            <person name="Priest M."/>
            <person name="Russ C."/>
            <person name="Smialowska A."/>
            <person name="Swoboda P."/>
            <person name="Sykes S.M."/>
            <person name="Vaughn M."/>
            <person name="Vengrova S."/>
            <person name="Yoder R."/>
            <person name="Zeng Q."/>
            <person name="Allshire R."/>
            <person name="Baulcombe D."/>
            <person name="Birren B.W."/>
            <person name="Brown W."/>
            <person name="Ekwall K."/>
            <person name="Kellis M."/>
            <person name="Leatherwood J."/>
            <person name="Levin H."/>
            <person name="Margalit H."/>
            <person name="Martienssen R."/>
            <person name="Nieduszynski C.A."/>
            <person name="Spatafora J.W."/>
            <person name="Friedman N."/>
            <person name="Dalgaard J.Z."/>
            <person name="Baumann P."/>
            <person name="Niki H."/>
            <person name="Regev A."/>
            <person name="Nusbaum C."/>
        </authorList>
    </citation>
    <scope>REVISION OF GENE MODEL</scope>
</reference>
<reference key="3">
    <citation type="journal article" date="2006" name="Nat. Biotechnol.">
        <title>ORFeome cloning and global analysis of protein localization in the fission yeast Schizosaccharomyces pombe.</title>
        <authorList>
            <person name="Matsuyama A."/>
            <person name="Arai R."/>
            <person name="Yashiroda Y."/>
            <person name="Shirai A."/>
            <person name="Kamata A."/>
            <person name="Sekido S."/>
            <person name="Kobayashi Y."/>
            <person name="Hashimoto A."/>
            <person name="Hamamoto M."/>
            <person name="Hiraoka Y."/>
            <person name="Horinouchi S."/>
            <person name="Yoshida M."/>
        </authorList>
    </citation>
    <scope>SUBCELLULAR LOCATION [LARGE SCALE ANALYSIS]</scope>
</reference>
<reference key="4">
    <citation type="journal article" date="2008" name="J. Proteome Res.">
        <title>Phosphoproteome analysis of fission yeast.</title>
        <authorList>
            <person name="Wilson-Grady J.T."/>
            <person name="Villen J."/>
            <person name="Gygi S.P."/>
        </authorList>
    </citation>
    <scope>PHOSPHORYLATION [LARGE SCALE ANALYSIS] AT SER-36 AND SER-85</scope>
    <scope>IDENTIFICATION BY MASS SPECTROMETRY</scope>
</reference>
<feature type="chain" id="PRO_0000316624" description="Nicotinamide/nicotinic acid mononucleotide adenylyltransferase">
    <location>
        <begin position="1"/>
        <end position="368"/>
    </location>
</feature>
<feature type="region of interest" description="Disordered" evidence="4">
    <location>
        <begin position="1"/>
        <end position="25"/>
    </location>
</feature>
<feature type="region of interest" description="Disordered" evidence="4">
    <location>
        <begin position="47"/>
        <end position="78"/>
    </location>
</feature>
<feature type="compositionally biased region" description="Polar residues" evidence="4">
    <location>
        <begin position="1"/>
        <end position="14"/>
    </location>
</feature>
<feature type="compositionally biased region" description="Polar residues" evidence="4">
    <location>
        <begin position="61"/>
        <end position="72"/>
    </location>
</feature>
<feature type="binding site" evidence="3">
    <location>
        <position position="135"/>
    </location>
    <ligand>
        <name>NAD(+)</name>
        <dbReference type="ChEBI" id="CHEBI:57540"/>
    </ligand>
</feature>
<feature type="binding site" evidence="3">
    <location>
        <position position="136"/>
    </location>
    <ligand>
        <name>NAD(+)</name>
        <dbReference type="ChEBI" id="CHEBI:57540"/>
    </ligand>
</feature>
<feature type="binding site" description="in other chain" evidence="3">
    <location>
        <position position="143"/>
    </location>
    <ligand>
        <name>ATP</name>
        <dbReference type="ChEBI" id="CHEBI:30616"/>
        <note>ligand shared between dimeric partners</note>
    </ligand>
</feature>
<feature type="binding site" evidence="3">
    <location>
        <position position="215"/>
    </location>
    <ligand>
        <name>NAD(+)</name>
        <dbReference type="ChEBI" id="CHEBI:57540"/>
    </ligand>
</feature>
<feature type="binding site" evidence="3">
    <location>
        <position position="250"/>
    </location>
    <ligand>
        <name>NAD(+)</name>
        <dbReference type="ChEBI" id="CHEBI:57540"/>
    </ligand>
</feature>
<feature type="binding site" evidence="3">
    <location>
        <position position="252"/>
    </location>
    <ligand>
        <name>NAD(+)</name>
        <dbReference type="ChEBI" id="CHEBI:57540"/>
    </ligand>
</feature>
<feature type="binding site" evidence="3">
    <location>
        <position position="263"/>
    </location>
    <ligand>
        <name>NAD(+)</name>
        <dbReference type="ChEBI" id="CHEBI:57540"/>
    </ligand>
</feature>
<feature type="binding site" evidence="3">
    <location>
        <position position="282"/>
    </location>
    <ligand>
        <name>NAD(+)</name>
        <dbReference type="ChEBI" id="CHEBI:57540"/>
    </ligand>
</feature>
<feature type="binding site" evidence="3">
    <location>
        <position position="313"/>
    </location>
    <ligand>
        <name>NAD(+)</name>
        <dbReference type="ChEBI" id="CHEBI:57540"/>
    </ligand>
</feature>
<feature type="binding site" description="in other chain" evidence="3">
    <location>
        <begin position="318"/>
        <end position="321"/>
    </location>
    <ligand>
        <name>ATP</name>
        <dbReference type="ChEBI" id="CHEBI:30616"/>
        <note>ligand shared between dimeric partners</note>
    </ligand>
</feature>
<feature type="modified residue" description="Phosphoserine" evidence="6">
    <location>
        <position position="36"/>
    </location>
</feature>
<feature type="modified residue" description="Phosphoserine" evidence="1">
    <location>
        <position position="75"/>
    </location>
</feature>
<feature type="modified residue" description="Phosphoserine" evidence="6">
    <location>
        <position position="85"/>
    </location>
</feature>
<name>NMAH_SCHPO</name>
<comment type="function">
    <text evidence="2">Catalyzes the formation of NAD(+) from nicotinamide mononucleotide (NMN) and ATP. Can also use the deamidated form; nicotinic acid mononucleotide (NaMN) as substrate to form deamido-NAD(+) (NaAD). Key enzyme in both de novo and salvage pathways for NAD(+) biosynthesis.</text>
</comment>
<comment type="catalytic activity">
    <reaction evidence="2">
        <text>beta-nicotinamide D-ribonucleotide + ATP + H(+) = diphosphate + NAD(+)</text>
        <dbReference type="Rhea" id="RHEA:21360"/>
        <dbReference type="ChEBI" id="CHEBI:14649"/>
        <dbReference type="ChEBI" id="CHEBI:15378"/>
        <dbReference type="ChEBI" id="CHEBI:30616"/>
        <dbReference type="ChEBI" id="CHEBI:33019"/>
        <dbReference type="ChEBI" id="CHEBI:57540"/>
        <dbReference type="EC" id="2.7.7.1"/>
    </reaction>
</comment>
<comment type="catalytic activity">
    <reaction evidence="2">
        <text>nicotinate beta-D-ribonucleotide + ATP + H(+) = deamido-NAD(+) + diphosphate</text>
        <dbReference type="Rhea" id="RHEA:22860"/>
        <dbReference type="ChEBI" id="CHEBI:15378"/>
        <dbReference type="ChEBI" id="CHEBI:30616"/>
        <dbReference type="ChEBI" id="CHEBI:33019"/>
        <dbReference type="ChEBI" id="CHEBI:57502"/>
        <dbReference type="ChEBI" id="CHEBI:58437"/>
        <dbReference type="EC" id="2.7.7.18"/>
    </reaction>
</comment>
<comment type="cofactor">
    <cofactor evidence="2">
        <name>a divalent metal cation</name>
        <dbReference type="ChEBI" id="CHEBI:60240"/>
    </cofactor>
</comment>
<comment type="pathway">
    <text evidence="2">Cofactor biosynthesis; NAD(+) biosynthesis; deamido-NAD(+) from nicotinate D-ribonucleotide: step 1/1.</text>
</comment>
<comment type="pathway">
    <text evidence="2">Cofactor biosynthesis; NAD(+) biosynthesis; NAD(+) from nicotinamide D-ribonucleotide: step 1/1.</text>
</comment>
<comment type="subcellular location">
    <subcellularLocation>
        <location evidence="5">Cytoplasm</location>
    </subcellularLocation>
    <subcellularLocation>
        <location evidence="5">Nucleus</location>
    </subcellularLocation>
</comment>
<comment type="similarity">
    <text evidence="7">Belongs to the eukaryotic NMN adenylyltransferase family.</text>
</comment>
<sequence>MHTMNGDNFANSFPKNPLLSRNSSSSNVIQYSDEFSPDEDWLNEHAAKEHEERIRRPSVNRAWQKNSTSGGPSVSLEKREADVASLGEVMDLEEVPRGITRQARQLNEYIFPKHRFRNHLVDEGKIPLVLVACGSFSPITYLHLRMFEMATDTIQEQTNMELVAGYFSPVNDHYKKEGLAPAYHRVRMCELACERTSSWLMVDAWESLQPSYTCTARVLDHFDEEINQKRGGITLSDGTKRPCKIMLLAGGDLIASMGEPGVWSDKDLHHILGKFGCCIVERTGSDVWAFLLAHDIMFAYRGNILVIKQLIYNDISSTKVRLFIRRGMSIRYLLPNSVIQYIERYALYRDAEPVKTIFYQSPFVRMEP</sequence>
<dbReference type="EC" id="2.7.7.1" evidence="2"/>
<dbReference type="EC" id="2.7.7.18" evidence="2"/>
<dbReference type="EMBL" id="CU329670">
    <property type="protein sequence ID" value="CAB55285.2"/>
    <property type="molecule type" value="Genomic_DNA"/>
</dbReference>
<dbReference type="PIR" id="T39098">
    <property type="entry name" value="T39098"/>
</dbReference>
<dbReference type="RefSeq" id="NP_592856.2">
    <property type="nucleotide sequence ID" value="NM_001018257.2"/>
</dbReference>
<dbReference type="SMR" id="Q9UT53"/>
<dbReference type="BioGRID" id="279489">
    <property type="interactions" value="7"/>
</dbReference>
<dbReference type="FunCoup" id="Q9UT53">
    <property type="interactions" value="181"/>
</dbReference>
<dbReference type="STRING" id="284812.Q9UT53"/>
<dbReference type="iPTMnet" id="Q9UT53"/>
<dbReference type="PaxDb" id="4896-SPAC806.06c.1"/>
<dbReference type="EnsemblFungi" id="SPAC806.06c.1">
    <property type="protein sequence ID" value="SPAC806.06c.1:pep"/>
    <property type="gene ID" value="SPAC806.06c"/>
</dbReference>
<dbReference type="KEGG" id="spo:2543055"/>
<dbReference type="PomBase" id="SPAC806.06c"/>
<dbReference type="VEuPathDB" id="FungiDB:SPAC806.06c"/>
<dbReference type="eggNOG" id="KOG3199">
    <property type="taxonomic scope" value="Eukaryota"/>
</dbReference>
<dbReference type="HOGENOM" id="CLU_033366_5_0_1"/>
<dbReference type="InParanoid" id="Q9UT53"/>
<dbReference type="OMA" id="VPHGIQR"/>
<dbReference type="Reactome" id="R-SPO-196807">
    <property type="pathway name" value="Nicotinate metabolism"/>
</dbReference>
<dbReference type="UniPathway" id="UPA00253">
    <property type="reaction ID" value="UER00332"/>
</dbReference>
<dbReference type="UniPathway" id="UPA00253">
    <property type="reaction ID" value="UER00600"/>
</dbReference>
<dbReference type="PRO" id="PR:Q9UT53"/>
<dbReference type="Proteomes" id="UP000002485">
    <property type="component" value="Chromosome I"/>
</dbReference>
<dbReference type="GO" id="GO:0005829">
    <property type="term" value="C:cytosol"/>
    <property type="evidence" value="ECO:0007005"/>
    <property type="project" value="PomBase"/>
</dbReference>
<dbReference type="GO" id="GO:0005634">
    <property type="term" value="C:nucleus"/>
    <property type="evidence" value="ECO:0007005"/>
    <property type="project" value="PomBase"/>
</dbReference>
<dbReference type="GO" id="GO:0005524">
    <property type="term" value="F:ATP binding"/>
    <property type="evidence" value="ECO:0007669"/>
    <property type="project" value="UniProtKB-KW"/>
</dbReference>
<dbReference type="GO" id="GO:0000309">
    <property type="term" value="F:nicotinamide-nucleotide adenylyltransferase activity"/>
    <property type="evidence" value="ECO:0000318"/>
    <property type="project" value="GO_Central"/>
</dbReference>
<dbReference type="GO" id="GO:0004515">
    <property type="term" value="F:nicotinate-nucleotide adenylyltransferase activity"/>
    <property type="evidence" value="ECO:0000318"/>
    <property type="project" value="GO_Central"/>
</dbReference>
<dbReference type="GO" id="GO:0009435">
    <property type="term" value="P:NAD biosynthetic process"/>
    <property type="evidence" value="ECO:0000318"/>
    <property type="project" value="GO_Central"/>
</dbReference>
<dbReference type="CDD" id="cd09286">
    <property type="entry name" value="NMNAT_Eukarya"/>
    <property type="match status" value="1"/>
</dbReference>
<dbReference type="FunFam" id="3.40.50.620:FF:000074">
    <property type="entry name" value="Nicotinamide-nucleotide adenylyltransferase"/>
    <property type="match status" value="1"/>
</dbReference>
<dbReference type="Gene3D" id="3.40.50.620">
    <property type="entry name" value="HUPs"/>
    <property type="match status" value="1"/>
</dbReference>
<dbReference type="InterPro" id="IPR004821">
    <property type="entry name" value="Cyt_trans-like"/>
</dbReference>
<dbReference type="InterPro" id="IPR051182">
    <property type="entry name" value="Euk_NMN_adenylyltrnsfrase"/>
</dbReference>
<dbReference type="InterPro" id="IPR005248">
    <property type="entry name" value="NadD/NMNAT"/>
</dbReference>
<dbReference type="InterPro" id="IPR045094">
    <property type="entry name" value="NMNAT_euk"/>
</dbReference>
<dbReference type="InterPro" id="IPR014729">
    <property type="entry name" value="Rossmann-like_a/b/a_fold"/>
</dbReference>
<dbReference type="NCBIfam" id="TIGR00482">
    <property type="entry name" value="nicotinate (nicotinamide) nucleotide adenylyltransferase"/>
    <property type="match status" value="1"/>
</dbReference>
<dbReference type="PANTHER" id="PTHR12039">
    <property type="entry name" value="NICOTINAMIDE MONONUCLEOTIDE ADENYLYLTRANSFERASE"/>
    <property type="match status" value="1"/>
</dbReference>
<dbReference type="PANTHER" id="PTHR12039:SF0">
    <property type="entry name" value="NICOTINAMIDE-NUCLEOTIDE ADENYLYLTRANSFERASE"/>
    <property type="match status" value="1"/>
</dbReference>
<dbReference type="Pfam" id="PF01467">
    <property type="entry name" value="CTP_transf_like"/>
    <property type="match status" value="1"/>
</dbReference>
<dbReference type="SUPFAM" id="SSF52374">
    <property type="entry name" value="Nucleotidylyl transferase"/>
    <property type="match status" value="1"/>
</dbReference>
<accession>Q9UT53</accession>
<gene>
    <name evidence="8" type="ORF">SPAC806.06c</name>
</gene>
<organism>
    <name type="scientific">Schizosaccharomyces pombe (strain 972 / ATCC 24843)</name>
    <name type="common">Fission yeast</name>
    <dbReference type="NCBI Taxonomy" id="284812"/>
    <lineage>
        <taxon>Eukaryota</taxon>
        <taxon>Fungi</taxon>
        <taxon>Dikarya</taxon>
        <taxon>Ascomycota</taxon>
        <taxon>Taphrinomycotina</taxon>
        <taxon>Schizosaccharomycetes</taxon>
        <taxon>Schizosaccharomycetales</taxon>
        <taxon>Schizosaccharomycetaceae</taxon>
        <taxon>Schizosaccharomyces</taxon>
    </lineage>
</organism>
<evidence type="ECO:0000250" key="1"/>
<evidence type="ECO:0000250" key="2">
    <source>
        <dbReference type="UniProtKB" id="Q06178"/>
    </source>
</evidence>
<evidence type="ECO:0000250" key="3">
    <source>
        <dbReference type="UniProtKB" id="Q96T66"/>
    </source>
</evidence>
<evidence type="ECO:0000256" key="4">
    <source>
        <dbReference type="SAM" id="MobiDB-lite"/>
    </source>
</evidence>
<evidence type="ECO:0000269" key="5">
    <source>
    </source>
</evidence>
<evidence type="ECO:0000269" key="6">
    <source>
    </source>
</evidence>
<evidence type="ECO:0000305" key="7"/>
<evidence type="ECO:0000312" key="8">
    <source>
        <dbReference type="PomBase" id="SPAC806.06c"/>
    </source>
</evidence>